<evidence type="ECO:0000250" key="1"/>
<evidence type="ECO:0000250" key="2">
    <source>
        <dbReference type="UniProtKB" id="G5BQH5"/>
    </source>
</evidence>
<evidence type="ECO:0000250" key="3">
    <source>
        <dbReference type="UniProtKB" id="P02647"/>
    </source>
</evidence>
<evidence type="ECO:0000250" key="4">
    <source>
        <dbReference type="UniProtKB" id="P04639"/>
    </source>
</evidence>
<evidence type="ECO:0000305" key="5"/>
<organism>
    <name type="scientific">Balaenoptera acutorostrata scammoni</name>
    <name type="common">North Pacific minke whale</name>
    <name type="synonym">Balaenoptera davidsoni</name>
    <dbReference type="NCBI Taxonomy" id="310752"/>
    <lineage>
        <taxon>Eukaryota</taxon>
        <taxon>Metazoa</taxon>
        <taxon>Chordata</taxon>
        <taxon>Craniata</taxon>
        <taxon>Vertebrata</taxon>
        <taxon>Euteleostomi</taxon>
        <taxon>Mammalia</taxon>
        <taxon>Eutheria</taxon>
        <taxon>Laurasiatheria</taxon>
        <taxon>Artiodactyla</taxon>
        <taxon>Whippomorpha</taxon>
        <taxon>Cetacea</taxon>
        <taxon>Mysticeti</taxon>
        <taxon>Balaenopteridae</taxon>
        <taxon>Balaenoptera</taxon>
    </lineage>
</organism>
<reference key="1">
    <citation type="submission" date="2013-06" db="EMBL/GenBank/DDBJ databases">
        <authorList>
            <person name="Zheng Y."/>
            <person name="Li E."/>
            <person name="Zhan S."/>
            <person name="Cho Y.S."/>
        </authorList>
    </citation>
    <scope>NUCLEOTIDE SEQUENCE [LARGE SCALE GENOMIC DNA]</scope>
</reference>
<reference key="2">
    <citation type="unpublished observations" date="2013-11">
        <authorList>
            <person name="Puppione D.L."/>
        </authorList>
    </citation>
    <scope>IDENTIFICATION</scope>
</reference>
<name>APOA1_BALAS</name>
<keyword id="KW-0153">Cholesterol metabolism</keyword>
<keyword id="KW-0325">Glycoprotein</keyword>
<keyword id="KW-0345">HDL</keyword>
<keyword id="KW-0443">Lipid metabolism</keyword>
<keyword id="KW-0445">Lipid transport</keyword>
<keyword id="KW-0449">Lipoprotein</keyword>
<keyword id="KW-0558">Oxidation</keyword>
<keyword id="KW-0564">Palmitate</keyword>
<keyword id="KW-0597">Phosphoprotein</keyword>
<keyword id="KW-1185">Reference proteome</keyword>
<keyword id="KW-0677">Repeat</keyword>
<keyword id="KW-0964">Secreted</keyword>
<keyword id="KW-0732">Signal</keyword>
<keyword id="KW-0753">Steroid metabolism</keyword>
<keyword id="KW-1207">Sterol metabolism</keyword>
<keyword id="KW-0813">Transport</keyword>
<accession>P0DMA6</accession>
<comment type="function">
    <text evidence="1">Participates in the reverse transport of cholesterol from tissues to the liver for excretion by promoting cholesterol efflux from tissues and by acting as a cofactor for the lecithin cholesterol acyltransferase (LCAT). As part of the SPAP complex, activates spermatozoa motility (By similarity).</text>
</comment>
<comment type="subunit">
    <text evidence="2 3 4">Homodimer (By similarity). Interacts with APOA1BP and CLU. Component of a sperm activating protein complex (SPAP), consisting of APOA1, an immunoglobulin heavy chain, an immunoglobulin light chain and albumin. Interacts with NDRG1. Interacts with SCGB3A2 (By similarity). Interacts with NAXE and YJEFN3 (By similarity).</text>
</comment>
<comment type="subcellular location">
    <subcellularLocation>
        <location>Secreted</location>
    </subcellularLocation>
</comment>
<comment type="tissue specificity">
    <text>Major protein of plasma HDL, also found in chylomicrons.</text>
</comment>
<comment type="PTM">
    <text evidence="1">Glycosylated.</text>
</comment>
<comment type="PTM">
    <text evidence="1">Palmitoylated.</text>
</comment>
<comment type="PTM">
    <text evidence="1">Phosphorylation sites are present in the extracellular medium.</text>
</comment>
<comment type="similarity">
    <text evidence="5">Belongs to the apolipoprotein A1/A4/E family.</text>
</comment>
<dbReference type="EMBL" id="ATDI01007014">
    <property type="status" value="NOT_ANNOTATED_CDS"/>
    <property type="molecule type" value="Genomic_DNA"/>
</dbReference>
<dbReference type="RefSeq" id="XP_007196619.1">
    <property type="nucleotide sequence ID" value="XM_007196557.1"/>
</dbReference>
<dbReference type="SMR" id="P0DMA6"/>
<dbReference type="FunCoup" id="P0DMA6">
    <property type="interactions" value="121"/>
</dbReference>
<dbReference type="STRING" id="310752.P0DMA6"/>
<dbReference type="GeneID" id="103019302"/>
<dbReference type="KEGG" id="bacu:103019302"/>
<dbReference type="CTD" id="335"/>
<dbReference type="InParanoid" id="P0DMA6"/>
<dbReference type="Proteomes" id="UP000261681">
    <property type="component" value="Unplaced"/>
</dbReference>
<dbReference type="GO" id="GO:0042627">
    <property type="term" value="C:chylomicron"/>
    <property type="evidence" value="ECO:0007669"/>
    <property type="project" value="TreeGrafter"/>
</dbReference>
<dbReference type="GO" id="GO:1903561">
    <property type="term" value="C:extracellular vesicle"/>
    <property type="evidence" value="ECO:0007669"/>
    <property type="project" value="TreeGrafter"/>
</dbReference>
<dbReference type="GO" id="GO:0034364">
    <property type="term" value="C:high-density lipoprotein particle"/>
    <property type="evidence" value="ECO:0007669"/>
    <property type="project" value="UniProtKB-KW"/>
</dbReference>
<dbReference type="GO" id="GO:0034362">
    <property type="term" value="C:low-density lipoprotein particle"/>
    <property type="evidence" value="ECO:0007669"/>
    <property type="project" value="TreeGrafter"/>
</dbReference>
<dbReference type="GO" id="GO:0034361">
    <property type="term" value="C:very-low-density lipoprotein particle"/>
    <property type="evidence" value="ECO:0007669"/>
    <property type="project" value="TreeGrafter"/>
</dbReference>
<dbReference type="GO" id="GO:0120020">
    <property type="term" value="F:cholesterol transfer activity"/>
    <property type="evidence" value="ECO:0007669"/>
    <property type="project" value="TreeGrafter"/>
</dbReference>
<dbReference type="GO" id="GO:0060228">
    <property type="term" value="F:phosphatidylcholine-sterol O-acyltransferase activator activity"/>
    <property type="evidence" value="ECO:0007669"/>
    <property type="project" value="TreeGrafter"/>
</dbReference>
<dbReference type="GO" id="GO:0005543">
    <property type="term" value="F:phospholipid binding"/>
    <property type="evidence" value="ECO:0007669"/>
    <property type="project" value="TreeGrafter"/>
</dbReference>
<dbReference type="GO" id="GO:0042803">
    <property type="term" value="F:protein homodimerization activity"/>
    <property type="evidence" value="ECO:0000250"/>
    <property type="project" value="UniProtKB"/>
</dbReference>
<dbReference type="GO" id="GO:0055090">
    <property type="term" value="P:acylglycerol homeostasis"/>
    <property type="evidence" value="ECO:0007669"/>
    <property type="project" value="TreeGrafter"/>
</dbReference>
<dbReference type="GO" id="GO:0033344">
    <property type="term" value="P:cholesterol efflux"/>
    <property type="evidence" value="ECO:0007669"/>
    <property type="project" value="TreeGrafter"/>
</dbReference>
<dbReference type="GO" id="GO:0008203">
    <property type="term" value="P:cholesterol metabolic process"/>
    <property type="evidence" value="ECO:0007669"/>
    <property type="project" value="UniProtKB-KW"/>
</dbReference>
<dbReference type="GO" id="GO:0042157">
    <property type="term" value="P:lipoprotein metabolic process"/>
    <property type="evidence" value="ECO:0007669"/>
    <property type="project" value="InterPro"/>
</dbReference>
<dbReference type="GO" id="GO:0033700">
    <property type="term" value="P:phospholipid efflux"/>
    <property type="evidence" value="ECO:0007669"/>
    <property type="project" value="TreeGrafter"/>
</dbReference>
<dbReference type="GO" id="GO:0010875">
    <property type="term" value="P:positive regulation of cholesterol efflux"/>
    <property type="evidence" value="ECO:0000250"/>
    <property type="project" value="UniProtKB"/>
</dbReference>
<dbReference type="GO" id="GO:0050766">
    <property type="term" value="P:positive regulation of phagocytosis"/>
    <property type="evidence" value="ECO:0000250"/>
    <property type="project" value="UniProtKB"/>
</dbReference>
<dbReference type="GO" id="GO:1902995">
    <property type="term" value="P:positive regulation of phospholipid efflux"/>
    <property type="evidence" value="ECO:0000250"/>
    <property type="project" value="UniProtKB"/>
</dbReference>
<dbReference type="GO" id="GO:0050821">
    <property type="term" value="P:protein stabilization"/>
    <property type="evidence" value="ECO:0000250"/>
    <property type="project" value="UniProtKB"/>
</dbReference>
<dbReference type="FunFam" id="1.20.120.20:FF:000001">
    <property type="entry name" value="Apolipoprotein A-I"/>
    <property type="match status" value="1"/>
</dbReference>
<dbReference type="FunFam" id="1.20.5.20:FF:000001">
    <property type="entry name" value="apolipoprotein A-I"/>
    <property type="match status" value="1"/>
</dbReference>
<dbReference type="Gene3D" id="1.20.5.20">
    <property type="match status" value="1"/>
</dbReference>
<dbReference type="Gene3D" id="6.10.140.380">
    <property type="match status" value="1"/>
</dbReference>
<dbReference type="Gene3D" id="1.20.120.20">
    <property type="entry name" value="Apolipoprotein"/>
    <property type="match status" value="1"/>
</dbReference>
<dbReference type="InterPro" id="IPR000074">
    <property type="entry name" value="ApoA_E"/>
</dbReference>
<dbReference type="InterPro" id="IPR050163">
    <property type="entry name" value="Apolipoprotein_A1/A4/E"/>
</dbReference>
<dbReference type="PANTHER" id="PTHR18976">
    <property type="entry name" value="APOLIPOPROTEIN"/>
    <property type="match status" value="1"/>
</dbReference>
<dbReference type="PANTHER" id="PTHR18976:SF11">
    <property type="entry name" value="APOLIPOPROTEIN A-I"/>
    <property type="match status" value="1"/>
</dbReference>
<dbReference type="Pfam" id="PF01442">
    <property type="entry name" value="Apolipoprotein"/>
    <property type="match status" value="1"/>
</dbReference>
<dbReference type="SUPFAM" id="SSF58113">
    <property type="entry name" value="Apolipoprotein A-I"/>
    <property type="match status" value="1"/>
</dbReference>
<feature type="signal peptide" evidence="1">
    <location>
        <begin position="1"/>
        <end position="18"/>
    </location>
</feature>
<feature type="chain" id="PRO_0000425318" description="Proapolipoprotein A-I">
    <location>
        <begin position="19"/>
        <end position="265"/>
    </location>
</feature>
<feature type="chain" id="PRO_0000425090" description="Apolipoprotein A-I">
    <location>
        <begin position="25"/>
        <end position="265"/>
    </location>
</feature>
<feature type="chain" id="PRO_0000425091" description="Truncated apolipoprotein A-I">
    <location>
        <begin position="25"/>
        <end position="264"/>
    </location>
</feature>
<feature type="repeat" description="1">
    <location>
        <begin position="67"/>
        <end position="88"/>
    </location>
</feature>
<feature type="repeat" description="2">
    <location>
        <begin position="89"/>
        <end position="110"/>
    </location>
</feature>
<feature type="repeat" description="3; half-length">
    <location>
        <begin position="111"/>
        <end position="121"/>
    </location>
</feature>
<feature type="repeat" description="4">
    <location>
        <begin position="122"/>
        <end position="142"/>
    </location>
</feature>
<feature type="repeat" description="5">
    <location>
        <begin position="144"/>
        <end position="165"/>
    </location>
</feature>
<feature type="repeat" description="6">
    <location>
        <begin position="166"/>
        <end position="187"/>
    </location>
</feature>
<feature type="repeat" description="7">
    <location>
        <begin position="188"/>
        <end position="209"/>
    </location>
</feature>
<feature type="repeat" description="8">
    <location>
        <begin position="210"/>
        <end position="230"/>
    </location>
</feature>
<feature type="repeat" description="9; half-length">
    <location>
        <begin position="231"/>
        <end position="241"/>
    </location>
</feature>
<feature type="repeat" description="10">
    <location>
        <begin position="242"/>
        <end position="265"/>
    </location>
</feature>
<feature type="region of interest" description="10 X approximate tandem repeats" evidence="1">
    <location>
        <begin position="67"/>
        <end position="265"/>
    </location>
</feature>
<feature type="modified residue" description="Methionine sulfoxide" evidence="1">
    <location>
        <position position="109"/>
    </location>
</feature>
<gene>
    <name type="primary">APOA1</name>
</gene>
<protein>
    <recommendedName>
        <fullName>Apolipoprotein A-I</fullName>
        <shortName>Apo-AI</shortName>
        <shortName>ApoA-I</shortName>
    </recommendedName>
    <alternativeName>
        <fullName>Apolipoprotein A1</fullName>
    </alternativeName>
    <component>
        <recommendedName>
            <fullName>Proapolipoprotein A-I</fullName>
            <shortName>ProapoA-I</shortName>
        </recommendedName>
    </component>
    <component>
        <recommendedName>
            <fullName>Truncated apolipoprotein A-I</fullName>
        </recommendedName>
    </component>
</protein>
<sequence length="265" mass="30514">MKAVVLTLAVLFLTGSQARHFWQQDDPQSSWDRVKDFATVYVDAIKDSGRDYVTQFEASALGKQLNLKLLDNWDSLTSTFAKVREQLGPVTREFWDNLEKETESLRQEMNKDLQEVKQKVQPYLDEFQKKWQEELQIYRQKVAPLGEELREGARQKVQELQDKLTPLAEEMRDRARAHVETLRQQLAPYSDELRQRMAARFEMLKEGGGSLVQYHAKASEQLKALGEKAKPALEDLRQGLLPVLENLKVSILAAIDEASKKLNAQ</sequence>
<proteinExistence type="evidence at transcript level"/>